<name>THIQ_SHISS</name>
<sequence>MLKLTDITWLYHHLPMRFSLTVERGEQVAILGPSGAGKSTLLNLIAGFLTPASGSLTIDSVDHTTTPPSRRPVSMLFQENNLFSHLTVAQNIGLGLNPGLKLNAAQQEKMHAIARQMGIDNLMARLPGELSGGQRQRVALARCLVREQPILLLDEPFSALDPALRQEMLTLVSTSCQQQKMTLLMVSHSVEDAARIATRSVVVADGRIAWQGKTDELLSGKASASALLGITG</sequence>
<protein>
    <recommendedName>
        <fullName evidence="1">Thiamine import ATP-binding protein ThiQ</fullName>
        <ecNumber evidence="1">7.6.2.15</ecNumber>
    </recommendedName>
</protein>
<comment type="function">
    <text evidence="1">Part of the ABC transporter complex ThiBPQ involved in thiamine import. Responsible for energy coupling to the transport system.</text>
</comment>
<comment type="catalytic activity">
    <reaction evidence="1">
        <text>thiamine(out) + ATP + H2O = thiamine(in) + ADP + phosphate + H(+)</text>
        <dbReference type="Rhea" id="RHEA:29811"/>
        <dbReference type="ChEBI" id="CHEBI:15377"/>
        <dbReference type="ChEBI" id="CHEBI:15378"/>
        <dbReference type="ChEBI" id="CHEBI:18385"/>
        <dbReference type="ChEBI" id="CHEBI:30616"/>
        <dbReference type="ChEBI" id="CHEBI:43474"/>
        <dbReference type="ChEBI" id="CHEBI:456216"/>
        <dbReference type="EC" id="7.6.2.15"/>
    </reaction>
</comment>
<comment type="subunit">
    <text evidence="1">The complex is composed of two ATP-binding proteins (ThiQ), two transmembrane proteins (ThiP) and a solute-binding protein (ThiB).</text>
</comment>
<comment type="subcellular location">
    <subcellularLocation>
        <location evidence="1">Cell inner membrane</location>
        <topology evidence="1">Peripheral membrane protein</topology>
    </subcellularLocation>
</comment>
<comment type="similarity">
    <text evidence="1">Belongs to the ABC transporter superfamily. Thiamine importer (TC 3.A.1.19.1) family.</text>
</comment>
<organism>
    <name type="scientific">Shigella sonnei (strain Ss046)</name>
    <dbReference type="NCBI Taxonomy" id="300269"/>
    <lineage>
        <taxon>Bacteria</taxon>
        <taxon>Pseudomonadati</taxon>
        <taxon>Pseudomonadota</taxon>
        <taxon>Gammaproteobacteria</taxon>
        <taxon>Enterobacterales</taxon>
        <taxon>Enterobacteriaceae</taxon>
        <taxon>Shigella</taxon>
    </lineage>
</organism>
<accession>Q3Z5U5</accession>
<evidence type="ECO:0000255" key="1">
    <source>
        <dbReference type="HAMAP-Rule" id="MF_01723"/>
    </source>
</evidence>
<reference key="1">
    <citation type="journal article" date="2005" name="Nucleic Acids Res.">
        <title>Genome dynamics and diversity of Shigella species, the etiologic agents of bacillary dysentery.</title>
        <authorList>
            <person name="Yang F."/>
            <person name="Yang J."/>
            <person name="Zhang X."/>
            <person name="Chen L."/>
            <person name="Jiang Y."/>
            <person name="Yan Y."/>
            <person name="Tang X."/>
            <person name="Wang J."/>
            <person name="Xiong Z."/>
            <person name="Dong J."/>
            <person name="Xue Y."/>
            <person name="Zhu Y."/>
            <person name="Xu X."/>
            <person name="Sun L."/>
            <person name="Chen S."/>
            <person name="Nie H."/>
            <person name="Peng J."/>
            <person name="Xu J."/>
            <person name="Wang Y."/>
            <person name="Yuan Z."/>
            <person name="Wen Y."/>
            <person name="Yao Z."/>
            <person name="Shen Y."/>
            <person name="Qiang B."/>
            <person name="Hou Y."/>
            <person name="Yu J."/>
            <person name="Jin Q."/>
        </authorList>
    </citation>
    <scope>NUCLEOTIDE SEQUENCE [LARGE SCALE GENOMIC DNA]</scope>
    <source>
        <strain>Ss046</strain>
    </source>
</reference>
<feature type="chain" id="PRO_0000274462" description="Thiamine import ATP-binding protein ThiQ">
    <location>
        <begin position="1"/>
        <end position="232"/>
    </location>
</feature>
<feature type="domain" description="ABC transporter" evidence="1">
    <location>
        <begin position="2"/>
        <end position="230"/>
    </location>
</feature>
<feature type="binding site" evidence="1">
    <location>
        <begin position="32"/>
        <end position="39"/>
    </location>
    <ligand>
        <name>ATP</name>
        <dbReference type="ChEBI" id="CHEBI:30616"/>
    </ligand>
</feature>
<dbReference type="EC" id="7.6.2.15" evidence="1"/>
<dbReference type="EMBL" id="CP000038">
    <property type="protein sequence ID" value="AAZ86867.1"/>
    <property type="molecule type" value="Genomic_DNA"/>
</dbReference>
<dbReference type="RefSeq" id="WP_000916308.1">
    <property type="nucleotide sequence ID" value="NC_007384.1"/>
</dbReference>
<dbReference type="SMR" id="Q3Z5U5"/>
<dbReference type="GeneID" id="93777371"/>
<dbReference type="KEGG" id="ssn:SSON_0072"/>
<dbReference type="HOGENOM" id="CLU_000604_1_22_6"/>
<dbReference type="Proteomes" id="UP000002529">
    <property type="component" value="Chromosome"/>
</dbReference>
<dbReference type="GO" id="GO:0005886">
    <property type="term" value="C:plasma membrane"/>
    <property type="evidence" value="ECO:0007669"/>
    <property type="project" value="UniProtKB-SubCell"/>
</dbReference>
<dbReference type="GO" id="GO:0048502">
    <property type="term" value="F:ABC-type thiamine transporter activity"/>
    <property type="evidence" value="ECO:0007669"/>
    <property type="project" value="UniProtKB-EC"/>
</dbReference>
<dbReference type="GO" id="GO:0005524">
    <property type="term" value="F:ATP binding"/>
    <property type="evidence" value="ECO:0007669"/>
    <property type="project" value="UniProtKB-KW"/>
</dbReference>
<dbReference type="GO" id="GO:0016887">
    <property type="term" value="F:ATP hydrolysis activity"/>
    <property type="evidence" value="ECO:0007669"/>
    <property type="project" value="InterPro"/>
</dbReference>
<dbReference type="CDD" id="cd03298">
    <property type="entry name" value="ABC_ThiQ_thiamine_transporter"/>
    <property type="match status" value="1"/>
</dbReference>
<dbReference type="FunFam" id="3.40.50.300:FF:001071">
    <property type="entry name" value="Thiamine import ATP-binding protein ThiQ"/>
    <property type="match status" value="1"/>
</dbReference>
<dbReference type="Gene3D" id="3.40.50.300">
    <property type="entry name" value="P-loop containing nucleotide triphosphate hydrolases"/>
    <property type="match status" value="1"/>
</dbReference>
<dbReference type="InterPro" id="IPR003593">
    <property type="entry name" value="AAA+_ATPase"/>
</dbReference>
<dbReference type="InterPro" id="IPR050093">
    <property type="entry name" value="ABC_SmlMolc_Importer"/>
</dbReference>
<dbReference type="InterPro" id="IPR003439">
    <property type="entry name" value="ABC_transporter-like_ATP-bd"/>
</dbReference>
<dbReference type="InterPro" id="IPR017871">
    <property type="entry name" value="ABC_transporter-like_CS"/>
</dbReference>
<dbReference type="InterPro" id="IPR027417">
    <property type="entry name" value="P-loop_NTPase"/>
</dbReference>
<dbReference type="InterPro" id="IPR005968">
    <property type="entry name" value="Thiamine_ABC_ThiQ"/>
</dbReference>
<dbReference type="NCBIfam" id="NF008039">
    <property type="entry name" value="PRK10771.1"/>
    <property type="match status" value="1"/>
</dbReference>
<dbReference type="NCBIfam" id="TIGR01277">
    <property type="entry name" value="thiQ"/>
    <property type="match status" value="1"/>
</dbReference>
<dbReference type="PANTHER" id="PTHR42781">
    <property type="entry name" value="SPERMIDINE/PUTRESCINE IMPORT ATP-BINDING PROTEIN POTA"/>
    <property type="match status" value="1"/>
</dbReference>
<dbReference type="PANTHER" id="PTHR42781:SF1">
    <property type="entry name" value="THIAMINE IMPORT ATP-BINDING PROTEIN THIQ"/>
    <property type="match status" value="1"/>
</dbReference>
<dbReference type="Pfam" id="PF00005">
    <property type="entry name" value="ABC_tran"/>
    <property type="match status" value="1"/>
</dbReference>
<dbReference type="SMART" id="SM00382">
    <property type="entry name" value="AAA"/>
    <property type="match status" value="1"/>
</dbReference>
<dbReference type="SUPFAM" id="SSF52540">
    <property type="entry name" value="P-loop containing nucleoside triphosphate hydrolases"/>
    <property type="match status" value="1"/>
</dbReference>
<dbReference type="PROSITE" id="PS00211">
    <property type="entry name" value="ABC_TRANSPORTER_1"/>
    <property type="match status" value="1"/>
</dbReference>
<dbReference type="PROSITE" id="PS50893">
    <property type="entry name" value="ABC_TRANSPORTER_2"/>
    <property type="match status" value="1"/>
</dbReference>
<dbReference type="PROSITE" id="PS51288">
    <property type="entry name" value="THIQ"/>
    <property type="match status" value="1"/>
</dbReference>
<keyword id="KW-0067">ATP-binding</keyword>
<keyword id="KW-0997">Cell inner membrane</keyword>
<keyword id="KW-1003">Cell membrane</keyword>
<keyword id="KW-0472">Membrane</keyword>
<keyword id="KW-0547">Nucleotide-binding</keyword>
<keyword id="KW-1185">Reference proteome</keyword>
<keyword id="KW-1278">Translocase</keyword>
<keyword id="KW-0813">Transport</keyword>
<gene>
    <name evidence="1" type="primary">thiQ</name>
    <name type="ordered locus">SSON_0072</name>
</gene>
<proteinExistence type="inferred from homology"/>